<feature type="initiator methionine" description="Removed" evidence="1">
    <location>
        <position position="1"/>
    </location>
</feature>
<feature type="chain" id="PRO_1000008699" description="Formamidopyrimidine-DNA glycosylase">
    <location>
        <begin position="2"/>
        <end position="271"/>
    </location>
</feature>
<feature type="zinc finger region" description="FPG-type" evidence="2">
    <location>
        <begin position="235"/>
        <end position="269"/>
    </location>
</feature>
<feature type="active site" description="Schiff-base intermediate with DNA" evidence="2">
    <location>
        <position position="2"/>
    </location>
</feature>
<feature type="active site" description="Proton donor" evidence="2">
    <location>
        <position position="3"/>
    </location>
</feature>
<feature type="active site" description="Proton donor; for beta-elimination activity" evidence="2">
    <location>
        <position position="57"/>
    </location>
</feature>
<feature type="active site" description="Proton donor; for delta-elimination activity" evidence="2">
    <location>
        <position position="259"/>
    </location>
</feature>
<feature type="binding site" evidence="2">
    <location>
        <position position="90"/>
    </location>
    <ligand>
        <name>DNA</name>
        <dbReference type="ChEBI" id="CHEBI:16991"/>
    </ligand>
</feature>
<feature type="binding site" evidence="2">
    <location>
        <position position="109"/>
    </location>
    <ligand>
        <name>DNA</name>
        <dbReference type="ChEBI" id="CHEBI:16991"/>
    </ligand>
</feature>
<feature type="binding site" evidence="2">
    <location>
        <position position="150"/>
    </location>
    <ligand>
        <name>DNA</name>
        <dbReference type="ChEBI" id="CHEBI:16991"/>
    </ligand>
</feature>
<keyword id="KW-0227">DNA damage</keyword>
<keyword id="KW-0234">DNA repair</keyword>
<keyword id="KW-0238">DNA-binding</keyword>
<keyword id="KW-0326">Glycosidase</keyword>
<keyword id="KW-0378">Hydrolase</keyword>
<keyword id="KW-0456">Lyase</keyword>
<keyword id="KW-0479">Metal-binding</keyword>
<keyword id="KW-0511">Multifunctional enzyme</keyword>
<keyword id="KW-0862">Zinc</keyword>
<keyword id="KW-0863">Zinc-finger</keyword>
<sequence>MPELPEVETALRGISPYLKNFTIEKVVVRQPKLRWAVSEELITLKNVKIVDLTRRAKYLIIHTEKGYIIGHLGMSGSVRIVPQNSAIDKHDHIDIVMNNGKLLRYNDPRRFGAWLWTENLDDFHLFLKLGPEPLSDEFNAEYLFKKSRQKSTALKTFLMDNAVVVGVGNIYANESLFICGIHPLKLAKNLTLNQCFSLVNTIKDVLRKAIIQGGTTLKDFLQPDGRPGYFAQELLVYGNKDKPCPKCGGKIESLIIGQRNSFFCPKCQKRG</sequence>
<evidence type="ECO:0000250" key="1"/>
<evidence type="ECO:0000255" key="2">
    <source>
        <dbReference type="HAMAP-Rule" id="MF_00103"/>
    </source>
</evidence>
<protein>
    <recommendedName>
        <fullName evidence="2">Formamidopyrimidine-DNA glycosylase</fullName>
        <shortName evidence="2">Fapy-DNA glycosylase</shortName>
        <ecNumber evidence="2">3.2.2.23</ecNumber>
    </recommendedName>
    <alternativeName>
        <fullName evidence="2">DNA-(apurinic or apyrimidinic site) lyase MutM</fullName>
        <shortName evidence="2">AP lyase MutM</shortName>
        <ecNumber evidence="2">4.2.99.18</ecNumber>
    </alternativeName>
</protein>
<comment type="function">
    <text evidence="2">Involved in base excision repair of DNA damaged by oxidation or by mutagenic agents. Acts as a DNA glycosylase that recognizes and removes damaged bases. Has a preference for oxidized purines, such as 7,8-dihydro-8-oxoguanine (8-oxoG). Has AP (apurinic/apyrimidinic) lyase activity and introduces nicks in the DNA strand. Cleaves the DNA backbone by beta-delta elimination to generate a single-strand break at the site of the removed base with both 3'- and 5'-phosphates.</text>
</comment>
<comment type="catalytic activity">
    <reaction evidence="2">
        <text>Hydrolysis of DNA containing ring-opened 7-methylguanine residues, releasing 2,6-diamino-4-hydroxy-5-(N-methyl)formamidopyrimidine.</text>
        <dbReference type="EC" id="3.2.2.23"/>
    </reaction>
</comment>
<comment type="catalytic activity">
    <reaction evidence="2">
        <text>2'-deoxyribonucleotide-(2'-deoxyribose 5'-phosphate)-2'-deoxyribonucleotide-DNA = a 3'-end 2'-deoxyribonucleotide-(2,3-dehydro-2,3-deoxyribose 5'-phosphate)-DNA + a 5'-end 5'-phospho-2'-deoxyribonucleoside-DNA + H(+)</text>
        <dbReference type="Rhea" id="RHEA:66592"/>
        <dbReference type="Rhea" id="RHEA-COMP:13180"/>
        <dbReference type="Rhea" id="RHEA-COMP:16897"/>
        <dbReference type="Rhea" id="RHEA-COMP:17067"/>
        <dbReference type="ChEBI" id="CHEBI:15378"/>
        <dbReference type="ChEBI" id="CHEBI:136412"/>
        <dbReference type="ChEBI" id="CHEBI:157695"/>
        <dbReference type="ChEBI" id="CHEBI:167181"/>
        <dbReference type="EC" id="4.2.99.18"/>
    </reaction>
</comment>
<comment type="cofactor">
    <cofactor evidence="2">
        <name>Zn(2+)</name>
        <dbReference type="ChEBI" id="CHEBI:29105"/>
    </cofactor>
    <text evidence="2">Binds 1 zinc ion per subunit.</text>
</comment>
<comment type="subunit">
    <text evidence="2">Monomer.</text>
</comment>
<comment type="similarity">
    <text evidence="2">Belongs to the FPG family.</text>
</comment>
<name>FPG_HAEIE</name>
<gene>
    <name evidence="2" type="primary">mutM</name>
    <name evidence="2" type="synonym">fpg</name>
    <name type="ordered locus">CGSHiEE_07235</name>
</gene>
<accession>A5UDC3</accession>
<proteinExistence type="inferred from homology"/>
<dbReference type="EC" id="3.2.2.23" evidence="2"/>
<dbReference type="EC" id="4.2.99.18" evidence="2"/>
<dbReference type="EMBL" id="CP000671">
    <property type="protein sequence ID" value="ABQ98774.1"/>
    <property type="molecule type" value="Genomic_DNA"/>
</dbReference>
<dbReference type="SMR" id="A5UDC3"/>
<dbReference type="KEGG" id="hip:CGSHiEE_07235"/>
<dbReference type="HOGENOM" id="CLU_038423_1_1_6"/>
<dbReference type="GO" id="GO:0034039">
    <property type="term" value="F:8-oxo-7,8-dihydroguanine DNA N-glycosylase activity"/>
    <property type="evidence" value="ECO:0007669"/>
    <property type="project" value="TreeGrafter"/>
</dbReference>
<dbReference type="GO" id="GO:0140078">
    <property type="term" value="F:class I DNA-(apurinic or apyrimidinic site) endonuclease activity"/>
    <property type="evidence" value="ECO:0007669"/>
    <property type="project" value="UniProtKB-EC"/>
</dbReference>
<dbReference type="GO" id="GO:0003684">
    <property type="term" value="F:damaged DNA binding"/>
    <property type="evidence" value="ECO:0007669"/>
    <property type="project" value="InterPro"/>
</dbReference>
<dbReference type="GO" id="GO:0008270">
    <property type="term" value="F:zinc ion binding"/>
    <property type="evidence" value="ECO:0007669"/>
    <property type="project" value="UniProtKB-UniRule"/>
</dbReference>
<dbReference type="GO" id="GO:0006284">
    <property type="term" value="P:base-excision repair"/>
    <property type="evidence" value="ECO:0007669"/>
    <property type="project" value="InterPro"/>
</dbReference>
<dbReference type="CDD" id="cd08966">
    <property type="entry name" value="EcFpg-like_N"/>
    <property type="match status" value="1"/>
</dbReference>
<dbReference type="FunFam" id="1.10.8.50:FF:000003">
    <property type="entry name" value="Formamidopyrimidine-DNA glycosylase"/>
    <property type="match status" value="1"/>
</dbReference>
<dbReference type="FunFam" id="3.20.190.10:FF:000001">
    <property type="entry name" value="Formamidopyrimidine-DNA glycosylase"/>
    <property type="match status" value="1"/>
</dbReference>
<dbReference type="Gene3D" id="1.10.8.50">
    <property type="match status" value="1"/>
</dbReference>
<dbReference type="Gene3D" id="3.20.190.10">
    <property type="entry name" value="MutM-like, N-terminal"/>
    <property type="match status" value="1"/>
</dbReference>
<dbReference type="HAMAP" id="MF_00103">
    <property type="entry name" value="Fapy_DNA_glycosyl"/>
    <property type="match status" value="1"/>
</dbReference>
<dbReference type="InterPro" id="IPR015886">
    <property type="entry name" value="DNA_glyclase/AP_lyase_DNA-bd"/>
</dbReference>
<dbReference type="InterPro" id="IPR015887">
    <property type="entry name" value="DNA_glyclase_Znf_dom_DNA_BS"/>
</dbReference>
<dbReference type="InterPro" id="IPR020629">
    <property type="entry name" value="Formamido-pyr_DNA_Glyclase"/>
</dbReference>
<dbReference type="InterPro" id="IPR012319">
    <property type="entry name" value="FPG_cat"/>
</dbReference>
<dbReference type="InterPro" id="IPR035937">
    <property type="entry name" value="MutM-like_N-ter"/>
</dbReference>
<dbReference type="InterPro" id="IPR010979">
    <property type="entry name" value="Ribosomal_uS13-like_H2TH"/>
</dbReference>
<dbReference type="InterPro" id="IPR000214">
    <property type="entry name" value="Znf_DNA_glyclase/AP_lyase"/>
</dbReference>
<dbReference type="InterPro" id="IPR010663">
    <property type="entry name" value="Znf_FPG/IleRS"/>
</dbReference>
<dbReference type="NCBIfam" id="TIGR00577">
    <property type="entry name" value="fpg"/>
    <property type="match status" value="1"/>
</dbReference>
<dbReference type="NCBIfam" id="NF002211">
    <property type="entry name" value="PRK01103.1"/>
    <property type="match status" value="1"/>
</dbReference>
<dbReference type="PANTHER" id="PTHR22993">
    <property type="entry name" value="FORMAMIDOPYRIMIDINE-DNA GLYCOSYLASE"/>
    <property type="match status" value="1"/>
</dbReference>
<dbReference type="PANTHER" id="PTHR22993:SF9">
    <property type="entry name" value="FORMAMIDOPYRIMIDINE-DNA GLYCOSYLASE"/>
    <property type="match status" value="1"/>
</dbReference>
<dbReference type="Pfam" id="PF01149">
    <property type="entry name" value="Fapy_DNA_glyco"/>
    <property type="match status" value="1"/>
</dbReference>
<dbReference type="Pfam" id="PF06831">
    <property type="entry name" value="H2TH"/>
    <property type="match status" value="1"/>
</dbReference>
<dbReference type="Pfam" id="PF06827">
    <property type="entry name" value="zf-FPG_IleRS"/>
    <property type="match status" value="1"/>
</dbReference>
<dbReference type="SMART" id="SM00898">
    <property type="entry name" value="Fapy_DNA_glyco"/>
    <property type="match status" value="1"/>
</dbReference>
<dbReference type="SMART" id="SM01232">
    <property type="entry name" value="H2TH"/>
    <property type="match status" value="1"/>
</dbReference>
<dbReference type="SUPFAM" id="SSF57716">
    <property type="entry name" value="Glucocorticoid receptor-like (DNA-binding domain)"/>
    <property type="match status" value="1"/>
</dbReference>
<dbReference type="SUPFAM" id="SSF81624">
    <property type="entry name" value="N-terminal domain of MutM-like DNA repair proteins"/>
    <property type="match status" value="1"/>
</dbReference>
<dbReference type="SUPFAM" id="SSF46946">
    <property type="entry name" value="S13-like H2TH domain"/>
    <property type="match status" value="1"/>
</dbReference>
<dbReference type="PROSITE" id="PS51068">
    <property type="entry name" value="FPG_CAT"/>
    <property type="match status" value="1"/>
</dbReference>
<dbReference type="PROSITE" id="PS01242">
    <property type="entry name" value="ZF_FPG_1"/>
    <property type="match status" value="1"/>
</dbReference>
<dbReference type="PROSITE" id="PS51066">
    <property type="entry name" value="ZF_FPG_2"/>
    <property type="match status" value="1"/>
</dbReference>
<organism>
    <name type="scientific">Haemophilus influenzae (strain PittEE)</name>
    <dbReference type="NCBI Taxonomy" id="374930"/>
    <lineage>
        <taxon>Bacteria</taxon>
        <taxon>Pseudomonadati</taxon>
        <taxon>Pseudomonadota</taxon>
        <taxon>Gammaproteobacteria</taxon>
        <taxon>Pasteurellales</taxon>
        <taxon>Pasteurellaceae</taxon>
        <taxon>Haemophilus</taxon>
    </lineage>
</organism>
<reference key="1">
    <citation type="journal article" date="2007" name="Genome Biol.">
        <title>Characterization and modeling of the Haemophilus influenzae core and supragenomes based on the complete genomic sequences of Rd and 12 clinical nontypeable strains.</title>
        <authorList>
            <person name="Hogg J.S."/>
            <person name="Hu F.Z."/>
            <person name="Janto B."/>
            <person name="Boissy R."/>
            <person name="Hayes J."/>
            <person name="Keefe R."/>
            <person name="Post J.C."/>
            <person name="Ehrlich G.D."/>
        </authorList>
    </citation>
    <scope>NUCLEOTIDE SEQUENCE [LARGE SCALE GENOMIC DNA]</scope>
    <source>
        <strain>PittEE</strain>
    </source>
</reference>